<sequence length="348" mass="39075">TEGPYFYVPMVNTTGIVRSPYEYPQYYLVNPAAYAVLGAYMFFLIILGFPINFLTLYVTLEHKKLRTPLNYILLNLAVADLFMVIGGFTTTMYSSMHGYFVLGRLGCNLEGFSATLGGMISLWSLAVLAIERWVVVCKPISNFRFGENHAIMGVSLTWTMALACTVPPLVGWSRYIPEGMQCSCGIDYYTRAEGFNNESFVLYMFFCHFMVPLIIIFFCYGRLLCAVKEAAAAQQESETTQRAEREVTRMVILMVIGYLVCWLPYASVAWFIFTHQGSEFGPLFMTIPAFFAKSSSIYNPVIYICMNKQFRNCMITTLFCGKNPFEGEEEGASSTKTEASSASSVSPA</sequence>
<dbReference type="EMBL" id="U57540">
    <property type="protein sequence ID" value="AAB39521.1"/>
    <property type="molecule type" value="mRNA"/>
</dbReference>
<dbReference type="SMR" id="P79808"/>
<dbReference type="GlyCosmos" id="P79808">
    <property type="glycosylation" value="2 sites, No reported glycans"/>
</dbReference>
<dbReference type="GO" id="GO:0016020">
    <property type="term" value="C:membrane"/>
    <property type="evidence" value="ECO:0000250"/>
    <property type="project" value="UniProtKB"/>
</dbReference>
<dbReference type="GO" id="GO:0097381">
    <property type="term" value="C:photoreceptor disc membrane"/>
    <property type="evidence" value="ECO:0000250"/>
    <property type="project" value="UniProtKB"/>
</dbReference>
<dbReference type="GO" id="GO:0005886">
    <property type="term" value="C:plasma membrane"/>
    <property type="evidence" value="ECO:0000250"/>
    <property type="project" value="UniProtKB"/>
</dbReference>
<dbReference type="GO" id="GO:0005502">
    <property type="term" value="F:11-cis retinal binding"/>
    <property type="evidence" value="ECO:0000250"/>
    <property type="project" value="UniProtKB"/>
</dbReference>
<dbReference type="GO" id="GO:0008020">
    <property type="term" value="F:G protein-coupled photoreceptor activity"/>
    <property type="evidence" value="ECO:0000250"/>
    <property type="project" value="UniProtKB"/>
</dbReference>
<dbReference type="GO" id="GO:0016038">
    <property type="term" value="P:absorption of visible light"/>
    <property type="evidence" value="ECO:0000250"/>
    <property type="project" value="UniProtKB"/>
</dbReference>
<dbReference type="GO" id="GO:0016056">
    <property type="term" value="P:G protein-coupled opsin signaling pathway"/>
    <property type="evidence" value="ECO:0000250"/>
    <property type="project" value="UniProtKB"/>
</dbReference>
<dbReference type="GO" id="GO:0007601">
    <property type="term" value="P:visual perception"/>
    <property type="evidence" value="ECO:0007669"/>
    <property type="project" value="UniProtKB-KW"/>
</dbReference>
<dbReference type="CDD" id="cd15080">
    <property type="entry name" value="7tmA_MWS_opsin"/>
    <property type="match status" value="1"/>
</dbReference>
<dbReference type="FunFam" id="1.20.1070.10:FF:000018">
    <property type="entry name" value="Rhodopsin"/>
    <property type="match status" value="1"/>
</dbReference>
<dbReference type="Gene3D" id="1.20.1070.10">
    <property type="entry name" value="Rhodopsin 7-helix transmembrane proteins"/>
    <property type="match status" value="1"/>
</dbReference>
<dbReference type="InterPro" id="IPR050125">
    <property type="entry name" value="GPCR_opsins"/>
</dbReference>
<dbReference type="InterPro" id="IPR000276">
    <property type="entry name" value="GPCR_Rhodpsn"/>
</dbReference>
<dbReference type="InterPro" id="IPR017452">
    <property type="entry name" value="GPCR_Rhodpsn_7TM"/>
</dbReference>
<dbReference type="InterPro" id="IPR001760">
    <property type="entry name" value="Opsin"/>
</dbReference>
<dbReference type="InterPro" id="IPR027430">
    <property type="entry name" value="Retinal_BS"/>
</dbReference>
<dbReference type="InterPro" id="IPR000732">
    <property type="entry name" value="Rhodopsin"/>
</dbReference>
<dbReference type="InterPro" id="IPR019477">
    <property type="entry name" value="Rhodopsin_N"/>
</dbReference>
<dbReference type="PANTHER" id="PTHR24240">
    <property type="entry name" value="OPSIN"/>
    <property type="match status" value="1"/>
</dbReference>
<dbReference type="Pfam" id="PF00001">
    <property type="entry name" value="7tm_1"/>
    <property type="match status" value="1"/>
</dbReference>
<dbReference type="Pfam" id="PF10413">
    <property type="entry name" value="Rhodopsin_N"/>
    <property type="match status" value="1"/>
</dbReference>
<dbReference type="PRINTS" id="PR00237">
    <property type="entry name" value="GPCRRHODOPSN"/>
</dbReference>
<dbReference type="PRINTS" id="PR00238">
    <property type="entry name" value="OPSIN"/>
</dbReference>
<dbReference type="PRINTS" id="PR00579">
    <property type="entry name" value="RHODOPSIN"/>
</dbReference>
<dbReference type="SUPFAM" id="SSF81321">
    <property type="entry name" value="Family A G protein-coupled receptor-like"/>
    <property type="match status" value="1"/>
</dbReference>
<dbReference type="PROSITE" id="PS00237">
    <property type="entry name" value="G_PROTEIN_RECEP_F1_1"/>
    <property type="match status" value="1"/>
</dbReference>
<dbReference type="PROSITE" id="PS50262">
    <property type="entry name" value="G_PROTEIN_RECEP_F1_2"/>
    <property type="match status" value="1"/>
</dbReference>
<dbReference type="PROSITE" id="PS00238">
    <property type="entry name" value="OPSIN"/>
    <property type="match status" value="1"/>
</dbReference>
<evidence type="ECO:0000250" key="1">
    <source>
        <dbReference type="UniProtKB" id="P02699"/>
    </source>
</evidence>
<evidence type="ECO:0000250" key="2">
    <source>
        <dbReference type="UniProtKB" id="P08100"/>
    </source>
</evidence>
<evidence type="ECO:0000250" key="3">
    <source>
        <dbReference type="UniProtKB" id="P32309"/>
    </source>
</evidence>
<evidence type="ECO:0000250" key="4">
    <source>
        <dbReference type="UniProtKB" id="P35359"/>
    </source>
</evidence>
<evidence type="ECO:0000255" key="5"/>
<evidence type="ECO:0000255" key="6">
    <source>
        <dbReference type="PROSITE-ProRule" id="PRU00521"/>
    </source>
</evidence>
<evidence type="ECO:0000256" key="7">
    <source>
        <dbReference type="SAM" id="MobiDB-lite"/>
    </source>
</evidence>
<evidence type="ECO:0000305" key="8"/>
<feature type="chain" id="PRO_0000197692" description="Rhodopsin">
    <location>
        <begin position="1" status="less than"/>
        <end position="348"/>
    </location>
</feature>
<feature type="topological domain" description="Extracellular" evidence="8">
    <location>
        <begin position="1" status="less than"/>
        <end position="33"/>
    </location>
</feature>
<feature type="transmembrane region" description="Helical; Name=1" evidence="1">
    <location>
        <begin position="34"/>
        <end position="58"/>
    </location>
</feature>
<feature type="topological domain" description="Cytoplasmic" evidence="8">
    <location>
        <begin position="59"/>
        <end position="70"/>
    </location>
</feature>
<feature type="transmembrane region" description="Helical; Name=2" evidence="1">
    <location>
        <begin position="71"/>
        <end position="93"/>
    </location>
</feature>
<feature type="topological domain" description="Extracellular" evidence="8">
    <location>
        <begin position="94"/>
        <end position="107"/>
    </location>
</feature>
<feature type="transmembrane region" description="Helical; Name=3" evidence="1">
    <location>
        <begin position="108"/>
        <end position="130"/>
    </location>
</feature>
<feature type="topological domain" description="Cytoplasmic" evidence="8">
    <location>
        <begin position="131"/>
        <end position="149"/>
    </location>
</feature>
<feature type="transmembrane region" description="Helical; Name=4" evidence="1">
    <location>
        <begin position="150"/>
        <end position="170"/>
    </location>
</feature>
<feature type="topological domain" description="Extracellular" evidence="8">
    <location>
        <begin position="171"/>
        <end position="199"/>
    </location>
</feature>
<feature type="transmembrane region" description="Helical; Name=5" evidence="1">
    <location>
        <begin position="200"/>
        <end position="221"/>
    </location>
</feature>
<feature type="topological domain" description="Cytoplasmic" evidence="8">
    <location>
        <begin position="222"/>
        <end position="249"/>
    </location>
</feature>
<feature type="transmembrane region" description="Helical; Name=6" evidence="1">
    <location>
        <begin position="250"/>
        <end position="271"/>
    </location>
</feature>
<feature type="topological domain" description="Extracellular" evidence="8">
    <location>
        <begin position="272"/>
        <end position="283"/>
    </location>
</feature>
<feature type="transmembrane region" description="Helical; Name=7" evidence="1">
    <location>
        <begin position="284"/>
        <end position="305"/>
    </location>
</feature>
<feature type="topological domain" description="Cytoplasmic" evidence="8">
    <location>
        <begin position="306"/>
        <end position="348"/>
    </location>
</feature>
<feature type="region of interest" description="Disordered" evidence="7">
    <location>
        <begin position="327"/>
        <end position="348"/>
    </location>
</feature>
<feature type="short sequence motif" description="'Ionic lock' involved in activated form stabilization" evidence="1">
    <location>
        <begin position="131"/>
        <end position="133"/>
    </location>
</feature>
<feature type="compositionally biased region" description="Low complexity" evidence="7">
    <location>
        <begin position="332"/>
        <end position="348"/>
    </location>
</feature>
<feature type="site" description="Plays an important role in the conformation switch to the active conformation" evidence="1">
    <location>
        <position position="110"/>
    </location>
</feature>
<feature type="modified residue" description="N6-(retinylidene)lysine" evidence="1">
    <location>
        <position position="293"/>
    </location>
</feature>
<feature type="lipid moiety-binding region" description="S-palmitoyl cysteine" evidence="1">
    <location>
        <position position="320"/>
    </location>
</feature>
<feature type="glycosylation site" description="N-linked (GlcNAc...) asparagine" evidence="5">
    <location>
        <position position="12"/>
    </location>
</feature>
<feature type="glycosylation site" description="N-linked (GlcNAc...) asparagine" evidence="5">
    <location>
        <position position="197"/>
    </location>
</feature>
<feature type="disulfide bond" evidence="6">
    <location>
        <begin position="107"/>
        <end position="184"/>
    </location>
</feature>
<feature type="non-terminal residue">
    <location>
        <position position="1"/>
    </location>
</feature>
<organism>
    <name type="scientific">Neoniphon argenteus</name>
    <name type="common">Clearfin squirrelfish</name>
    <dbReference type="NCBI Taxonomy" id="47704"/>
    <lineage>
        <taxon>Eukaryota</taxon>
        <taxon>Metazoa</taxon>
        <taxon>Chordata</taxon>
        <taxon>Craniata</taxon>
        <taxon>Vertebrata</taxon>
        <taxon>Euteleostomi</taxon>
        <taxon>Actinopterygii</taxon>
        <taxon>Neopterygii</taxon>
        <taxon>Teleostei</taxon>
        <taxon>Neoteleostei</taxon>
        <taxon>Acanthomorphata</taxon>
        <taxon>Holocentriformes</taxon>
        <taxon>Holocentridae</taxon>
        <taxon>Neoniphon</taxon>
    </lineage>
</organism>
<proteinExistence type="evidence at transcript level"/>
<protein>
    <recommendedName>
        <fullName>Rhodopsin</fullName>
    </recommendedName>
</protein>
<gene>
    <name type="primary">rho</name>
</gene>
<name>OPSD_NEOAR</name>
<reference key="1">
    <citation type="submission" date="1997-01" db="EMBL/GenBank/DDBJ databases">
        <title>Molecular phylogeny of 11 holocentrid fishes (Order Beryciformes) inferred from rhodopsin cDNA and cytochrome b.</title>
        <authorList>
            <person name="Toller W.W."/>
            <person name="Moses K."/>
            <person name="McFall-Ngai M.J."/>
        </authorList>
    </citation>
    <scope>NUCLEOTIDE SEQUENCE [MRNA]</scope>
    <source>
        <tissue>Eye</tissue>
    </source>
</reference>
<keyword id="KW-0966">Cell projection</keyword>
<keyword id="KW-0157">Chromophore</keyword>
<keyword id="KW-1015">Disulfide bond</keyword>
<keyword id="KW-0297">G-protein coupled receptor</keyword>
<keyword id="KW-0325">Glycoprotein</keyword>
<keyword id="KW-0449">Lipoprotein</keyword>
<keyword id="KW-0472">Membrane</keyword>
<keyword id="KW-0564">Palmitate</keyword>
<keyword id="KW-0597">Phosphoprotein</keyword>
<keyword id="KW-0600">Photoreceptor protein</keyword>
<keyword id="KW-0675">Receptor</keyword>
<keyword id="KW-0681">Retinal protein</keyword>
<keyword id="KW-0716">Sensory transduction</keyword>
<keyword id="KW-0807">Transducer</keyword>
<keyword id="KW-0812">Transmembrane</keyword>
<keyword id="KW-1133">Transmembrane helix</keyword>
<keyword id="KW-0844">Vision</keyword>
<comment type="function">
    <text evidence="1 2 3">Photoreceptor required for image-forming vision at low light intensity. While most salt water fish species use retinal as chromophore, most freshwater fish use 3-dehydroretinal, or a mixture of retinal and 3-dehydroretinal (By similarity). Light-induced isomerization of 11-cis to all-trans retinal triggers a conformational change that activates signaling via G-proteins. Subsequent receptor phosphorylation mediates displacement of the bound G-protein alpha subunit by arrestin and terminates signaling (By similarity).</text>
</comment>
<comment type="subcellular location">
    <subcellularLocation>
        <location evidence="2">Membrane</location>
        <topology evidence="2">Multi-pass membrane protein</topology>
    </subcellularLocation>
    <subcellularLocation>
        <location evidence="4">Cell projection</location>
        <location evidence="4">Cilium</location>
        <location evidence="4">Photoreceptor outer segment</location>
    </subcellularLocation>
    <text evidence="2">Synthesized in the inner segment (IS) of rod photoreceptor cells before vectorial transport to disk membranes in the rod outer segment (OS) photosensory cilia.</text>
</comment>
<comment type="PTM">
    <text evidence="1">Phosphorylated on some or all of the serine and threonine residues present in the C-terminal region.</text>
</comment>
<comment type="PTM">
    <text evidence="1">Contains one covalently linked retinal chromophore.</text>
</comment>
<comment type="similarity">
    <text evidence="6">Belongs to the G-protein coupled receptor 1 family. Opsin subfamily.</text>
</comment>
<accession>P79808</accession>